<accession>A9N0R2</accession>
<keyword id="KW-0012">Acyltransferase</keyword>
<keyword id="KW-0028">Amino-acid biosynthesis</keyword>
<keyword id="KW-0963">Cytoplasm</keyword>
<keyword id="KW-0220">Diaminopimelate biosynthesis</keyword>
<keyword id="KW-0457">Lysine biosynthesis</keyword>
<keyword id="KW-0677">Repeat</keyword>
<keyword id="KW-0808">Transferase</keyword>
<gene>
    <name evidence="1" type="primary">dapD</name>
    <name type="ordered locus">SPAB_00272</name>
</gene>
<name>DAPD_SALPB</name>
<sequence length="274" mass="29852">MQQLQNVIETAFERRADITPANVDTVTREAVNQVISLLDSGALRVAEKIDGQWVTHQWLKKAVLLSFRINDNQVIDGAESRYFDKVPMKFADYDEARFQKEGFRVVPPAAVRQGAFIARNTVLMPSYVNIGAYVDEGTMVDTWATVGSCAQIGKNVHLSGGVGIGGVLEPLQANPTIIEDNCFIGARSEVVEGVIVEEGSVISMGVYLGQSTKIYDRETGEVHYGRVPAGSVVVSGNLPSKDGKYSLYCAVIVKKVDAKTRGKVGINELLRTID</sequence>
<comment type="catalytic activity">
    <reaction evidence="1">
        <text>(S)-2,3,4,5-tetrahydrodipicolinate + succinyl-CoA + H2O = (S)-2-succinylamino-6-oxoheptanedioate + CoA</text>
        <dbReference type="Rhea" id="RHEA:17325"/>
        <dbReference type="ChEBI" id="CHEBI:15377"/>
        <dbReference type="ChEBI" id="CHEBI:15685"/>
        <dbReference type="ChEBI" id="CHEBI:16845"/>
        <dbReference type="ChEBI" id="CHEBI:57287"/>
        <dbReference type="ChEBI" id="CHEBI:57292"/>
        <dbReference type="EC" id="2.3.1.117"/>
    </reaction>
</comment>
<comment type="pathway">
    <text evidence="1">Amino-acid biosynthesis; L-lysine biosynthesis via DAP pathway; LL-2,6-diaminopimelate from (S)-tetrahydrodipicolinate (succinylase route): step 1/3.</text>
</comment>
<comment type="subunit">
    <text evidence="1">Homotrimer.</text>
</comment>
<comment type="subcellular location">
    <subcellularLocation>
        <location evidence="1">Cytoplasm</location>
    </subcellularLocation>
</comment>
<comment type="similarity">
    <text evidence="1">Belongs to the transferase hexapeptide repeat family.</text>
</comment>
<proteinExistence type="inferred from homology"/>
<feature type="chain" id="PRO_1000083756" description="2,3,4,5-tetrahydropyridine-2,6-dicarboxylate N-succinyltransferase">
    <location>
        <begin position="1"/>
        <end position="274"/>
    </location>
</feature>
<feature type="binding site" evidence="1">
    <location>
        <position position="104"/>
    </location>
    <ligand>
        <name>substrate</name>
    </ligand>
</feature>
<feature type="binding site" evidence="1">
    <location>
        <position position="141"/>
    </location>
    <ligand>
        <name>substrate</name>
    </ligand>
</feature>
<organism>
    <name type="scientific">Salmonella paratyphi B (strain ATCC BAA-1250 / SPB7)</name>
    <dbReference type="NCBI Taxonomy" id="1016998"/>
    <lineage>
        <taxon>Bacteria</taxon>
        <taxon>Pseudomonadati</taxon>
        <taxon>Pseudomonadota</taxon>
        <taxon>Gammaproteobacteria</taxon>
        <taxon>Enterobacterales</taxon>
        <taxon>Enterobacteriaceae</taxon>
        <taxon>Salmonella</taxon>
    </lineage>
</organism>
<reference key="1">
    <citation type="submission" date="2007-11" db="EMBL/GenBank/DDBJ databases">
        <authorList>
            <consortium name="The Salmonella enterica serovar Paratyphi B Genome Sequencing Project"/>
            <person name="McClelland M."/>
            <person name="Sanderson E.K."/>
            <person name="Porwollik S."/>
            <person name="Spieth J."/>
            <person name="Clifton W.S."/>
            <person name="Fulton R."/>
            <person name="Cordes M."/>
            <person name="Wollam A."/>
            <person name="Shah N."/>
            <person name="Pepin K."/>
            <person name="Bhonagiri V."/>
            <person name="Nash W."/>
            <person name="Johnson M."/>
            <person name="Thiruvilangam P."/>
            <person name="Wilson R."/>
        </authorList>
    </citation>
    <scope>NUCLEOTIDE SEQUENCE [LARGE SCALE GENOMIC DNA]</scope>
    <source>
        <strain>ATCC BAA-1250 / SPB7</strain>
    </source>
</reference>
<evidence type="ECO:0000255" key="1">
    <source>
        <dbReference type="HAMAP-Rule" id="MF_00811"/>
    </source>
</evidence>
<protein>
    <recommendedName>
        <fullName evidence="1">2,3,4,5-tetrahydropyridine-2,6-dicarboxylate N-succinyltransferase</fullName>
        <ecNumber evidence="1">2.3.1.117</ecNumber>
    </recommendedName>
    <alternativeName>
        <fullName evidence="1">Tetrahydrodipicolinate N-succinyltransferase</fullName>
        <shortName evidence="1">THDP succinyltransferase</shortName>
        <shortName evidence="1">THP succinyltransferase</shortName>
        <shortName evidence="1">Tetrahydropicolinate succinylase</shortName>
    </alternativeName>
</protein>
<dbReference type="EC" id="2.3.1.117" evidence="1"/>
<dbReference type="EMBL" id="CP000886">
    <property type="protein sequence ID" value="ABX65714.1"/>
    <property type="molecule type" value="Genomic_DNA"/>
</dbReference>
<dbReference type="RefSeq" id="WP_001186673.1">
    <property type="nucleotide sequence ID" value="NC_010102.1"/>
</dbReference>
<dbReference type="SMR" id="A9N0R2"/>
<dbReference type="KEGG" id="spq:SPAB_00272"/>
<dbReference type="PATRIC" id="fig|1016998.12.peg.264"/>
<dbReference type="HOGENOM" id="CLU_050859_0_1_6"/>
<dbReference type="BioCyc" id="SENT1016998:SPAB_RS01105-MONOMER"/>
<dbReference type="UniPathway" id="UPA00034">
    <property type="reaction ID" value="UER00019"/>
</dbReference>
<dbReference type="Proteomes" id="UP000008556">
    <property type="component" value="Chromosome"/>
</dbReference>
<dbReference type="GO" id="GO:0005737">
    <property type="term" value="C:cytoplasm"/>
    <property type="evidence" value="ECO:0007669"/>
    <property type="project" value="UniProtKB-SubCell"/>
</dbReference>
<dbReference type="GO" id="GO:0008666">
    <property type="term" value="F:2,3,4,5-tetrahydropyridine-2,6-dicarboxylate N-succinyltransferase activity"/>
    <property type="evidence" value="ECO:0007669"/>
    <property type="project" value="UniProtKB-UniRule"/>
</dbReference>
<dbReference type="GO" id="GO:0016779">
    <property type="term" value="F:nucleotidyltransferase activity"/>
    <property type="evidence" value="ECO:0007669"/>
    <property type="project" value="TreeGrafter"/>
</dbReference>
<dbReference type="GO" id="GO:0019877">
    <property type="term" value="P:diaminopimelate biosynthetic process"/>
    <property type="evidence" value="ECO:0007669"/>
    <property type="project" value="UniProtKB-UniRule"/>
</dbReference>
<dbReference type="GO" id="GO:0009089">
    <property type="term" value="P:lysine biosynthetic process via diaminopimelate"/>
    <property type="evidence" value="ECO:0007669"/>
    <property type="project" value="UniProtKB-UniRule"/>
</dbReference>
<dbReference type="CDD" id="cd03350">
    <property type="entry name" value="LbH_THP_succinylT"/>
    <property type="match status" value="1"/>
</dbReference>
<dbReference type="FunFam" id="1.10.166.10:FF:000001">
    <property type="entry name" value="2,3,4,5-tetrahydropyridine-2,6-dicarboxylate N-succinyltransferase"/>
    <property type="match status" value="1"/>
</dbReference>
<dbReference type="FunFam" id="2.160.10.10:FF:000004">
    <property type="entry name" value="2,3,4,5-tetrahydropyridine-2,6-dicarboxylate N-succinyltransferase"/>
    <property type="match status" value="1"/>
</dbReference>
<dbReference type="Gene3D" id="2.160.10.10">
    <property type="entry name" value="Hexapeptide repeat proteins"/>
    <property type="match status" value="1"/>
</dbReference>
<dbReference type="Gene3D" id="1.10.166.10">
    <property type="entry name" value="Tetrahydrodipicolinate-N-succinyltransferase, N-terminal domain"/>
    <property type="match status" value="1"/>
</dbReference>
<dbReference type="HAMAP" id="MF_00811">
    <property type="entry name" value="DapD"/>
    <property type="match status" value="1"/>
</dbReference>
<dbReference type="InterPro" id="IPR005664">
    <property type="entry name" value="DapD_Trfase_Hexpep_rpt_fam"/>
</dbReference>
<dbReference type="InterPro" id="IPR001451">
    <property type="entry name" value="Hexapep"/>
</dbReference>
<dbReference type="InterPro" id="IPR018357">
    <property type="entry name" value="Hexapep_transf_CS"/>
</dbReference>
<dbReference type="InterPro" id="IPR023180">
    <property type="entry name" value="THP_succinylTrfase_dom1"/>
</dbReference>
<dbReference type="InterPro" id="IPR037133">
    <property type="entry name" value="THP_succinylTrfase_N_sf"/>
</dbReference>
<dbReference type="InterPro" id="IPR011004">
    <property type="entry name" value="Trimer_LpxA-like_sf"/>
</dbReference>
<dbReference type="NCBIfam" id="TIGR00965">
    <property type="entry name" value="dapD"/>
    <property type="match status" value="1"/>
</dbReference>
<dbReference type="NCBIfam" id="NF008808">
    <property type="entry name" value="PRK11830.1"/>
    <property type="match status" value="1"/>
</dbReference>
<dbReference type="PANTHER" id="PTHR19136:SF52">
    <property type="entry name" value="2,3,4,5-TETRAHYDROPYRIDINE-2,6-DICARBOXYLATE N-SUCCINYLTRANSFERASE"/>
    <property type="match status" value="1"/>
</dbReference>
<dbReference type="PANTHER" id="PTHR19136">
    <property type="entry name" value="MOLYBDENUM COFACTOR GUANYLYLTRANSFERASE"/>
    <property type="match status" value="1"/>
</dbReference>
<dbReference type="Pfam" id="PF14602">
    <property type="entry name" value="Hexapep_2"/>
    <property type="match status" value="1"/>
</dbReference>
<dbReference type="Pfam" id="PF14805">
    <property type="entry name" value="THDPS_N_2"/>
    <property type="match status" value="1"/>
</dbReference>
<dbReference type="SUPFAM" id="SSF51161">
    <property type="entry name" value="Trimeric LpxA-like enzymes"/>
    <property type="match status" value="1"/>
</dbReference>
<dbReference type="PROSITE" id="PS00101">
    <property type="entry name" value="HEXAPEP_TRANSFERASES"/>
    <property type="match status" value="1"/>
</dbReference>